<accession>Q6GH27</accession>
<reference key="1">
    <citation type="journal article" date="2004" name="Proc. Natl. Acad. Sci. U.S.A.">
        <title>Complete genomes of two clinical Staphylococcus aureus strains: evidence for the rapid evolution of virulence and drug resistance.</title>
        <authorList>
            <person name="Holden M.T.G."/>
            <person name="Feil E.J."/>
            <person name="Lindsay J.A."/>
            <person name="Peacock S.J."/>
            <person name="Day N.P.J."/>
            <person name="Enright M.C."/>
            <person name="Foster T.J."/>
            <person name="Moore C.E."/>
            <person name="Hurst L."/>
            <person name="Atkin R."/>
            <person name="Barron A."/>
            <person name="Bason N."/>
            <person name="Bentley S.D."/>
            <person name="Chillingworth C."/>
            <person name="Chillingworth T."/>
            <person name="Churcher C."/>
            <person name="Clark L."/>
            <person name="Corton C."/>
            <person name="Cronin A."/>
            <person name="Doggett J."/>
            <person name="Dowd L."/>
            <person name="Feltwell T."/>
            <person name="Hance Z."/>
            <person name="Harris B."/>
            <person name="Hauser H."/>
            <person name="Holroyd S."/>
            <person name="Jagels K."/>
            <person name="James K.D."/>
            <person name="Lennard N."/>
            <person name="Line A."/>
            <person name="Mayes R."/>
            <person name="Moule S."/>
            <person name="Mungall K."/>
            <person name="Ormond D."/>
            <person name="Quail M.A."/>
            <person name="Rabbinowitsch E."/>
            <person name="Rutherford K.M."/>
            <person name="Sanders M."/>
            <person name="Sharp S."/>
            <person name="Simmonds M."/>
            <person name="Stevens K."/>
            <person name="Whitehead S."/>
            <person name="Barrell B.G."/>
            <person name="Spratt B.G."/>
            <person name="Parkhill J."/>
        </authorList>
    </citation>
    <scope>NUCLEOTIDE SEQUENCE [LARGE SCALE GENOMIC DNA]</scope>
    <source>
        <strain>MRSA252</strain>
    </source>
</reference>
<organism>
    <name type="scientific">Staphylococcus aureus (strain MRSA252)</name>
    <dbReference type="NCBI Taxonomy" id="282458"/>
    <lineage>
        <taxon>Bacteria</taxon>
        <taxon>Bacillati</taxon>
        <taxon>Bacillota</taxon>
        <taxon>Bacilli</taxon>
        <taxon>Bacillales</taxon>
        <taxon>Staphylococcaceae</taxon>
        <taxon>Staphylococcus</taxon>
    </lineage>
</organism>
<evidence type="ECO:0000250" key="1">
    <source>
        <dbReference type="UniProtKB" id="Q2FYQ7"/>
    </source>
</evidence>
<evidence type="ECO:0000255" key="2">
    <source>
        <dbReference type="PROSITE-ProRule" id="PRU00434"/>
    </source>
</evidence>
<evidence type="ECO:0000305" key="3"/>
<dbReference type="EC" id="7.2.2.11" evidence="1"/>
<dbReference type="EMBL" id="BX571856">
    <property type="protein sequence ID" value="CAG40390.1"/>
    <property type="molecule type" value="Genomic_DNA"/>
</dbReference>
<dbReference type="RefSeq" id="WP_000052330.1">
    <property type="nucleotide sequence ID" value="NC_002952.2"/>
</dbReference>
<dbReference type="SMR" id="Q6GH27"/>
<dbReference type="KEGG" id="sar:SAR1393"/>
<dbReference type="HOGENOM" id="CLU_000604_1_23_9"/>
<dbReference type="Proteomes" id="UP000000596">
    <property type="component" value="Chromosome"/>
</dbReference>
<dbReference type="GO" id="GO:0005886">
    <property type="term" value="C:plasma membrane"/>
    <property type="evidence" value="ECO:0007669"/>
    <property type="project" value="UniProtKB-SubCell"/>
</dbReference>
<dbReference type="GO" id="GO:0015413">
    <property type="term" value="F:ABC-type nickel transporter activity"/>
    <property type="evidence" value="ECO:0007669"/>
    <property type="project" value="UniProtKB-EC"/>
</dbReference>
<dbReference type="GO" id="GO:0005524">
    <property type="term" value="F:ATP binding"/>
    <property type="evidence" value="ECO:0007669"/>
    <property type="project" value="UniProtKB-KW"/>
</dbReference>
<dbReference type="GO" id="GO:0016887">
    <property type="term" value="F:ATP hydrolysis activity"/>
    <property type="evidence" value="ECO:0007669"/>
    <property type="project" value="InterPro"/>
</dbReference>
<dbReference type="FunFam" id="3.40.50.300:FF:001826">
    <property type="entry name" value="Nickel import system ATP-binding protein NikD"/>
    <property type="match status" value="1"/>
</dbReference>
<dbReference type="Gene3D" id="3.40.50.300">
    <property type="entry name" value="P-loop containing nucleotide triphosphate hydrolases"/>
    <property type="match status" value="1"/>
</dbReference>
<dbReference type="InterPro" id="IPR003593">
    <property type="entry name" value="AAA+_ATPase"/>
</dbReference>
<dbReference type="InterPro" id="IPR050388">
    <property type="entry name" value="ABC_Ni/Peptide_Import"/>
</dbReference>
<dbReference type="InterPro" id="IPR003439">
    <property type="entry name" value="ABC_transporter-like_ATP-bd"/>
</dbReference>
<dbReference type="InterPro" id="IPR027417">
    <property type="entry name" value="P-loop_NTPase"/>
</dbReference>
<dbReference type="PANTHER" id="PTHR43297:SF13">
    <property type="entry name" value="NICKEL ABC TRANSPORTER, ATP-BINDING PROTEIN"/>
    <property type="match status" value="1"/>
</dbReference>
<dbReference type="PANTHER" id="PTHR43297">
    <property type="entry name" value="OLIGOPEPTIDE TRANSPORT ATP-BINDING PROTEIN APPD"/>
    <property type="match status" value="1"/>
</dbReference>
<dbReference type="Pfam" id="PF00005">
    <property type="entry name" value="ABC_tran"/>
    <property type="match status" value="1"/>
</dbReference>
<dbReference type="SMART" id="SM00382">
    <property type="entry name" value="AAA"/>
    <property type="match status" value="1"/>
</dbReference>
<dbReference type="SUPFAM" id="SSF52540">
    <property type="entry name" value="P-loop containing nucleoside triphosphate hydrolases"/>
    <property type="match status" value="1"/>
</dbReference>
<dbReference type="PROSITE" id="PS50893">
    <property type="entry name" value="ABC_TRANSPORTER_2"/>
    <property type="match status" value="1"/>
</dbReference>
<sequence>MSLIDIQNLTIKNTSEKSLIKGIDLKIYNQQINALIGESGAGKSLIAKALLEYLPFDLTCTYDSYQFDGENVSRLSQYYGHTIGYIYQNYAESFNDHTKLGKQLTAIYRKHYKSCKEEALSKIDKALSWVNLQSKDILNKYSFQLSGGQLERVYIASVLMLKPKLIIADEPVASLDALNGNQVMDLLQHIVLEHGQTLFIITHNLSHVLKYCQYIYVLKEGQIIERGNINHFKYEHLHPYTERLIKYRTQLKRDYYD</sequence>
<proteinExistence type="inferred from homology"/>
<name>NIKD_STAAR</name>
<feature type="chain" id="PRO_0000276794" description="Nickel import system ATP-binding protein NikD">
    <location>
        <begin position="1"/>
        <end position="257"/>
    </location>
</feature>
<feature type="domain" description="ABC transporter" evidence="2">
    <location>
        <begin position="4"/>
        <end position="245"/>
    </location>
</feature>
<feature type="binding site" evidence="2">
    <location>
        <begin position="37"/>
        <end position="44"/>
    </location>
    <ligand>
        <name>ATP</name>
        <dbReference type="ChEBI" id="CHEBI:30616"/>
    </ligand>
</feature>
<protein>
    <recommendedName>
        <fullName evidence="1">Nickel import system ATP-binding protein NikD</fullName>
        <ecNumber evidence="1">7.2.2.11</ecNumber>
    </recommendedName>
</protein>
<comment type="function">
    <text evidence="1">Part of the ABC transporter complex NikABCDE (Opp2) involved in nickel import. Probably responsible for energy coupling to the transport system.</text>
</comment>
<comment type="catalytic activity">
    <reaction evidence="1">
        <text>Ni(2+)(out) + ATP + H2O = Ni(2+)(in) + ADP + phosphate + H(+)</text>
        <dbReference type="Rhea" id="RHEA:15557"/>
        <dbReference type="ChEBI" id="CHEBI:15377"/>
        <dbReference type="ChEBI" id="CHEBI:15378"/>
        <dbReference type="ChEBI" id="CHEBI:30616"/>
        <dbReference type="ChEBI" id="CHEBI:43474"/>
        <dbReference type="ChEBI" id="CHEBI:49786"/>
        <dbReference type="ChEBI" id="CHEBI:456216"/>
        <dbReference type="EC" id="7.2.2.11"/>
    </reaction>
    <physiologicalReaction direction="left-to-right" evidence="1">
        <dbReference type="Rhea" id="RHEA:15558"/>
    </physiologicalReaction>
</comment>
<comment type="subunit">
    <text evidence="1">The complex is composed of two ATP-binding proteins (NikD and NikE), two transmembrane proteins (NikB and NikC) and a solute-binding protein (NikA).</text>
</comment>
<comment type="subcellular location">
    <subcellularLocation>
        <location evidence="3">Cell membrane</location>
        <topology evidence="3">Peripheral membrane protein</topology>
    </subcellularLocation>
</comment>
<comment type="similarity">
    <text evidence="3">Belongs to the ABC transporter superfamily.</text>
</comment>
<keyword id="KW-0067">ATP-binding</keyword>
<keyword id="KW-1003">Cell membrane</keyword>
<keyword id="KW-0406">Ion transport</keyword>
<keyword id="KW-0472">Membrane</keyword>
<keyword id="KW-0533">Nickel</keyword>
<keyword id="KW-0921">Nickel transport</keyword>
<keyword id="KW-0547">Nucleotide-binding</keyword>
<keyword id="KW-1278">Translocase</keyword>
<keyword id="KW-0813">Transport</keyword>
<gene>
    <name evidence="1" type="primary">nikD</name>
    <name type="synonym">oppD2</name>
    <name type="ordered locus">SAR1393</name>
</gene>